<proteinExistence type="inferred from homology"/>
<dbReference type="EC" id="3.6.-.-" evidence="1"/>
<dbReference type="EMBL" id="CP000359">
    <property type="protein sequence ID" value="ABF44780.1"/>
    <property type="molecule type" value="Genomic_DNA"/>
</dbReference>
<dbReference type="RefSeq" id="WP_011529622.1">
    <property type="nucleotide sequence ID" value="NC_008025.1"/>
</dbReference>
<dbReference type="SMR" id="Q1J154"/>
<dbReference type="STRING" id="319795.Dgeo_0478"/>
<dbReference type="KEGG" id="dge:Dgeo_0478"/>
<dbReference type="eggNOG" id="COG0486">
    <property type="taxonomic scope" value="Bacteria"/>
</dbReference>
<dbReference type="HOGENOM" id="CLU_019624_4_1_0"/>
<dbReference type="Proteomes" id="UP000002431">
    <property type="component" value="Chromosome"/>
</dbReference>
<dbReference type="GO" id="GO:0005829">
    <property type="term" value="C:cytosol"/>
    <property type="evidence" value="ECO:0007669"/>
    <property type="project" value="TreeGrafter"/>
</dbReference>
<dbReference type="GO" id="GO:0005525">
    <property type="term" value="F:GTP binding"/>
    <property type="evidence" value="ECO:0007669"/>
    <property type="project" value="UniProtKB-UniRule"/>
</dbReference>
<dbReference type="GO" id="GO:0003924">
    <property type="term" value="F:GTPase activity"/>
    <property type="evidence" value="ECO:0007669"/>
    <property type="project" value="UniProtKB-UniRule"/>
</dbReference>
<dbReference type="GO" id="GO:0046872">
    <property type="term" value="F:metal ion binding"/>
    <property type="evidence" value="ECO:0007669"/>
    <property type="project" value="UniProtKB-KW"/>
</dbReference>
<dbReference type="GO" id="GO:0030488">
    <property type="term" value="P:tRNA methylation"/>
    <property type="evidence" value="ECO:0007669"/>
    <property type="project" value="TreeGrafter"/>
</dbReference>
<dbReference type="GO" id="GO:0002098">
    <property type="term" value="P:tRNA wobble uridine modification"/>
    <property type="evidence" value="ECO:0007669"/>
    <property type="project" value="TreeGrafter"/>
</dbReference>
<dbReference type="CDD" id="cd04164">
    <property type="entry name" value="trmE"/>
    <property type="match status" value="1"/>
</dbReference>
<dbReference type="CDD" id="cd14858">
    <property type="entry name" value="TrmE_N"/>
    <property type="match status" value="1"/>
</dbReference>
<dbReference type="FunFam" id="3.40.50.300:FF:001376">
    <property type="entry name" value="tRNA modification GTPase MnmE"/>
    <property type="match status" value="1"/>
</dbReference>
<dbReference type="Gene3D" id="3.40.50.300">
    <property type="entry name" value="P-loop containing nucleotide triphosphate hydrolases"/>
    <property type="match status" value="1"/>
</dbReference>
<dbReference type="Gene3D" id="3.30.1360.120">
    <property type="entry name" value="Probable tRNA modification gtpase trme, domain 1"/>
    <property type="match status" value="1"/>
</dbReference>
<dbReference type="Gene3D" id="1.20.120.430">
    <property type="entry name" value="tRNA modification GTPase MnmE domain 2"/>
    <property type="match status" value="1"/>
</dbReference>
<dbReference type="HAMAP" id="MF_00379">
    <property type="entry name" value="GTPase_MnmE"/>
    <property type="match status" value="1"/>
</dbReference>
<dbReference type="InterPro" id="IPR031168">
    <property type="entry name" value="G_TrmE"/>
</dbReference>
<dbReference type="InterPro" id="IPR006073">
    <property type="entry name" value="GTP-bd"/>
</dbReference>
<dbReference type="InterPro" id="IPR018948">
    <property type="entry name" value="GTP-bd_TrmE_N"/>
</dbReference>
<dbReference type="InterPro" id="IPR004520">
    <property type="entry name" value="GTPase_MnmE"/>
</dbReference>
<dbReference type="InterPro" id="IPR027368">
    <property type="entry name" value="MnmE_dom2"/>
</dbReference>
<dbReference type="InterPro" id="IPR025867">
    <property type="entry name" value="MnmE_helical"/>
</dbReference>
<dbReference type="InterPro" id="IPR027417">
    <property type="entry name" value="P-loop_NTPase"/>
</dbReference>
<dbReference type="InterPro" id="IPR005225">
    <property type="entry name" value="Small_GTP-bd"/>
</dbReference>
<dbReference type="InterPro" id="IPR027266">
    <property type="entry name" value="TrmE/GcvT_dom1"/>
</dbReference>
<dbReference type="NCBIfam" id="TIGR00450">
    <property type="entry name" value="mnmE_trmE_thdF"/>
    <property type="match status" value="1"/>
</dbReference>
<dbReference type="NCBIfam" id="NF003661">
    <property type="entry name" value="PRK05291.1-3"/>
    <property type="match status" value="1"/>
</dbReference>
<dbReference type="NCBIfam" id="TIGR00231">
    <property type="entry name" value="small_GTP"/>
    <property type="match status" value="1"/>
</dbReference>
<dbReference type="PANTHER" id="PTHR42714">
    <property type="entry name" value="TRNA MODIFICATION GTPASE GTPBP3"/>
    <property type="match status" value="1"/>
</dbReference>
<dbReference type="PANTHER" id="PTHR42714:SF2">
    <property type="entry name" value="TRNA MODIFICATION GTPASE GTPBP3, MITOCHONDRIAL"/>
    <property type="match status" value="1"/>
</dbReference>
<dbReference type="Pfam" id="PF01926">
    <property type="entry name" value="MMR_HSR1"/>
    <property type="match status" value="1"/>
</dbReference>
<dbReference type="Pfam" id="PF12631">
    <property type="entry name" value="MnmE_helical"/>
    <property type="match status" value="1"/>
</dbReference>
<dbReference type="Pfam" id="PF10396">
    <property type="entry name" value="TrmE_N"/>
    <property type="match status" value="1"/>
</dbReference>
<dbReference type="PRINTS" id="PR00326">
    <property type="entry name" value="GTP1OBG"/>
</dbReference>
<dbReference type="SUPFAM" id="SSF52540">
    <property type="entry name" value="P-loop containing nucleoside triphosphate hydrolases"/>
    <property type="match status" value="1"/>
</dbReference>
<dbReference type="PROSITE" id="PS51709">
    <property type="entry name" value="G_TRME"/>
    <property type="match status" value="1"/>
</dbReference>
<feature type="chain" id="PRO_0000345769" description="tRNA modification GTPase MnmE">
    <location>
        <begin position="1"/>
        <end position="439"/>
    </location>
</feature>
<feature type="domain" description="TrmE-type G">
    <location>
        <begin position="220"/>
        <end position="367"/>
    </location>
</feature>
<feature type="binding site" evidence="1">
    <location>
        <position position="26"/>
    </location>
    <ligand>
        <name>(6S)-5-formyl-5,6,7,8-tetrahydrofolate</name>
        <dbReference type="ChEBI" id="CHEBI:57457"/>
    </ligand>
</feature>
<feature type="binding site" evidence="1">
    <location>
        <position position="88"/>
    </location>
    <ligand>
        <name>(6S)-5-formyl-5,6,7,8-tetrahydrofolate</name>
        <dbReference type="ChEBI" id="CHEBI:57457"/>
    </ligand>
</feature>
<feature type="binding site" evidence="1">
    <location>
        <position position="127"/>
    </location>
    <ligand>
        <name>(6S)-5-formyl-5,6,7,8-tetrahydrofolate</name>
        <dbReference type="ChEBI" id="CHEBI:57457"/>
    </ligand>
</feature>
<feature type="binding site" evidence="1">
    <location>
        <begin position="230"/>
        <end position="235"/>
    </location>
    <ligand>
        <name>GTP</name>
        <dbReference type="ChEBI" id="CHEBI:37565"/>
    </ligand>
</feature>
<feature type="binding site" evidence="1">
    <location>
        <position position="230"/>
    </location>
    <ligand>
        <name>K(+)</name>
        <dbReference type="ChEBI" id="CHEBI:29103"/>
    </ligand>
</feature>
<feature type="binding site" evidence="1">
    <location>
        <position position="234"/>
    </location>
    <ligand>
        <name>Mg(2+)</name>
        <dbReference type="ChEBI" id="CHEBI:18420"/>
    </ligand>
</feature>
<feature type="binding site" evidence="1">
    <location>
        <begin position="249"/>
        <end position="255"/>
    </location>
    <ligand>
        <name>GTP</name>
        <dbReference type="ChEBI" id="CHEBI:37565"/>
    </ligand>
</feature>
<feature type="binding site" evidence="1">
    <location>
        <position position="249"/>
    </location>
    <ligand>
        <name>K(+)</name>
        <dbReference type="ChEBI" id="CHEBI:29103"/>
    </ligand>
</feature>
<feature type="binding site" evidence="1">
    <location>
        <position position="251"/>
    </location>
    <ligand>
        <name>K(+)</name>
        <dbReference type="ChEBI" id="CHEBI:29103"/>
    </ligand>
</feature>
<feature type="binding site" evidence="1">
    <location>
        <position position="254"/>
    </location>
    <ligand>
        <name>K(+)</name>
        <dbReference type="ChEBI" id="CHEBI:29103"/>
    </ligand>
</feature>
<feature type="binding site" evidence="1">
    <location>
        <position position="255"/>
    </location>
    <ligand>
        <name>Mg(2+)</name>
        <dbReference type="ChEBI" id="CHEBI:18420"/>
    </ligand>
</feature>
<feature type="binding site" evidence="1">
    <location>
        <begin position="274"/>
        <end position="277"/>
    </location>
    <ligand>
        <name>GTP</name>
        <dbReference type="ChEBI" id="CHEBI:37565"/>
    </ligand>
</feature>
<feature type="binding site" evidence="1">
    <location>
        <position position="439"/>
    </location>
    <ligand>
        <name>(6S)-5-formyl-5,6,7,8-tetrahydrofolate</name>
        <dbReference type="ChEBI" id="CHEBI:57457"/>
    </ligand>
</feature>
<protein>
    <recommendedName>
        <fullName evidence="1">tRNA modification GTPase MnmE</fullName>
        <ecNumber evidence="1">3.6.-.-</ecNumber>
    </recommendedName>
</protein>
<accession>Q1J154</accession>
<sequence length="439" mass="46025">MTRTGLSDTIAAIATAPGSAGVGIVRISGPDALGIADGAFRGRRRPSATRGGRFLFGQLVAGDGEVLDEGLCLVFRGPHSYTGEDVAELQTHGSPAVLARVLSRVLELGARPARPGEFTLRAYLAGRLDLAQAEAVLELVNAGTETARRQAALGLSGALGERVERIAAHVTRTLAALQAMLDYPEEGVPDEDRTVPLAAAEAELHALVGTARAGQVATRGARLALIGRPNAGKSSLLNALLGYERSIVTPIPGTTRDYLEAQLSLAGVPVTLVDTAGLRETGDEVEAAGVRQAVRLAESADLVLVLEDGSQPRDHLPAELPRETRMLRVRTKADLPAAWTDPGALDVSAVTGQGLSALRDAIHTALIGDAAQGEAWLTTERQADAARRALTHIQAARSLPDDLAGYELEEALRALADLTGRDVQDDVVDAVFRNFCVGK</sequence>
<organism>
    <name type="scientific">Deinococcus geothermalis (strain DSM 11300 / CIP 105573 / AG-3a)</name>
    <dbReference type="NCBI Taxonomy" id="319795"/>
    <lineage>
        <taxon>Bacteria</taxon>
        <taxon>Thermotogati</taxon>
        <taxon>Deinococcota</taxon>
        <taxon>Deinococci</taxon>
        <taxon>Deinococcales</taxon>
        <taxon>Deinococcaceae</taxon>
        <taxon>Deinococcus</taxon>
    </lineage>
</organism>
<comment type="function">
    <text evidence="1">Exhibits a very high intrinsic GTPase hydrolysis rate. Involved in the addition of a carboxymethylaminomethyl (cmnm) group at the wobble position (U34) of certain tRNAs, forming tRNA-cmnm(5)s(2)U34.</text>
</comment>
<comment type="cofactor">
    <cofactor evidence="1">
        <name>K(+)</name>
        <dbReference type="ChEBI" id="CHEBI:29103"/>
    </cofactor>
    <text evidence="1">Binds 1 potassium ion per subunit.</text>
</comment>
<comment type="subunit">
    <text evidence="1">Homodimer. Heterotetramer of two MnmE and two MnmG subunits.</text>
</comment>
<comment type="subcellular location">
    <subcellularLocation>
        <location evidence="1">Cytoplasm</location>
    </subcellularLocation>
</comment>
<comment type="similarity">
    <text evidence="1">Belongs to the TRAFAC class TrmE-Era-EngA-EngB-Septin-like GTPase superfamily. TrmE GTPase family.</text>
</comment>
<evidence type="ECO:0000255" key="1">
    <source>
        <dbReference type="HAMAP-Rule" id="MF_00379"/>
    </source>
</evidence>
<gene>
    <name evidence="1" type="primary">mnmE</name>
    <name evidence="1" type="synonym">trmE</name>
    <name type="ordered locus">Dgeo_0478</name>
</gene>
<name>MNME_DEIGD</name>
<keyword id="KW-0963">Cytoplasm</keyword>
<keyword id="KW-0342">GTP-binding</keyword>
<keyword id="KW-0378">Hydrolase</keyword>
<keyword id="KW-0460">Magnesium</keyword>
<keyword id="KW-0479">Metal-binding</keyword>
<keyword id="KW-0547">Nucleotide-binding</keyword>
<keyword id="KW-0630">Potassium</keyword>
<keyword id="KW-0819">tRNA processing</keyword>
<reference key="1">
    <citation type="submission" date="2006-04" db="EMBL/GenBank/DDBJ databases">
        <title>Complete sequence of chromosome of Deinococcus geothermalis DSM 11300.</title>
        <authorList>
            <person name="Copeland A."/>
            <person name="Lucas S."/>
            <person name="Lapidus A."/>
            <person name="Barry K."/>
            <person name="Detter J.C."/>
            <person name="Glavina del Rio T."/>
            <person name="Hammon N."/>
            <person name="Israni S."/>
            <person name="Dalin E."/>
            <person name="Tice H."/>
            <person name="Pitluck S."/>
            <person name="Brettin T."/>
            <person name="Bruce D."/>
            <person name="Han C."/>
            <person name="Tapia R."/>
            <person name="Saunders E."/>
            <person name="Gilna P."/>
            <person name="Schmutz J."/>
            <person name="Larimer F."/>
            <person name="Land M."/>
            <person name="Hauser L."/>
            <person name="Kyrpides N."/>
            <person name="Kim E."/>
            <person name="Daly M.J."/>
            <person name="Fredrickson J.K."/>
            <person name="Makarova K.S."/>
            <person name="Gaidamakova E.K."/>
            <person name="Zhai M."/>
            <person name="Richardson P."/>
        </authorList>
    </citation>
    <scope>NUCLEOTIDE SEQUENCE [LARGE SCALE GENOMIC DNA]</scope>
    <source>
        <strain>DSM 11300 / CIP 105573 / AG-3a</strain>
    </source>
</reference>